<name>OL112_ARAHY</name>
<protein>
    <recommendedName>
        <fullName evidence="4">Oleosin Ara h 11.0102</fullName>
    </recommendedName>
    <allergenName evidence="4">Ara h 11.0102</allergenName>
</protein>
<sequence length="137" mass="14354">MAEALYYGGRQRQDQPRSTQLVKATTAVVAGGSLLILAGLVLAATVIGLTTITPLFVIFSPVLVPAVITVALLGLGFLASGGFGVAAITVLTWIYRYVTGKHPPGANQLDTARHKLMSKAREIKDYGQQQTSGAQAS</sequence>
<accession>Q45W86</accession>
<evidence type="ECO:0000255" key="1"/>
<evidence type="ECO:0000269" key="2">
    <source>
    </source>
</evidence>
<evidence type="ECO:0000303" key="3">
    <source>
    </source>
</evidence>
<evidence type="ECO:0000305" key="4"/>
<evidence type="ECO:0000312" key="5">
    <source>
        <dbReference type="EMBL" id="AAZ20277.1"/>
    </source>
</evidence>
<evidence type="ECO:0000312" key="6">
    <source>
        <dbReference type="EMBL" id="RYR32942.1"/>
    </source>
</evidence>
<evidence type="ECO:0000312" key="7">
    <source>
        <dbReference type="Proteomes" id="UP000289738"/>
    </source>
</evidence>
<comment type="function">
    <text evidence="4">May have a structural role to stabilize the lipid body during desiccation of the seed by preventing coalescence of the oil. Probably interacts with both lipid and phospholipid moieties of lipid bodies. May also provide recognition signals for specific lipase anchorage in lipolysis during seedling growth.</text>
</comment>
<comment type="subcellular location">
    <subcellularLocation>
        <location evidence="2">Lipid droplet</location>
    </subcellularLocation>
    <subcellularLocation>
        <location evidence="1">Membrane</location>
        <topology evidence="1">Multi-pass membrane protein</topology>
    </subcellularLocation>
    <text evidence="4">Surface of oil bodies. Oleosins exist at a monolayer lipid/water interface.</text>
</comment>
<comment type="tissue specificity">
    <text evidence="2">Expressed in seeds (at protein level).</text>
</comment>
<comment type="allergen">
    <text evidence="2">Causes an allergic reaction in human. Pooled with Ara h 10 binds to IgE in 75% of the 4 peanut-allergic patients tested.</text>
</comment>
<comment type="similarity">
    <text evidence="4">Belongs to the oleosin family.</text>
</comment>
<proteinExistence type="evidence at protein level"/>
<keyword id="KW-0007">Acetylation</keyword>
<keyword id="KW-0020">Allergen</keyword>
<keyword id="KW-0903">Direct protein sequencing</keyword>
<keyword id="KW-0551">Lipid droplet</keyword>
<keyword id="KW-0472">Membrane</keyword>
<keyword id="KW-1185">Reference proteome</keyword>
<keyword id="KW-0812">Transmembrane</keyword>
<keyword id="KW-1133">Transmembrane helix</keyword>
<dbReference type="EMBL" id="DQ097717">
    <property type="protein sequence ID" value="AAZ20277.1"/>
    <property type="molecule type" value="mRNA"/>
</dbReference>
<dbReference type="EMBL" id="SDMP01000010">
    <property type="protein sequence ID" value="RYR32942.1"/>
    <property type="molecule type" value="Genomic_DNA"/>
</dbReference>
<dbReference type="SMR" id="Q45W86"/>
<dbReference type="STRING" id="3818.Q45W86"/>
<dbReference type="Allergome" id="11752">
    <property type="allergen name" value="Ara h 11.0102"/>
</dbReference>
<dbReference type="Allergome" id="5760">
    <property type="allergen name" value="Ara h 11"/>
</dbReference>
<dbReference type="iPTMnet" id="Q45W86"/>
<dbReference type="EnsemblPlants" id="arahy.Tifrunner.gnm2.ann2.Ah10g356600.1">
    <property type="protein sequence ID" value="arahy.Tifrunner.gnm2.ann2.Ah10g356600.1-CDS-1"/>
    <property type="gene ID" value="arahy.Tifrunner.gnm2.ann2.Ah10g356600"/>
</dbReference>
<dbReference type="Gramene" id="arahy.Tifrunner.gnm2.ann2.Ah10g356600.1">
    <property type="protein sequence ID" value="arahy.Tifrunner.gnm2.ann2.Ah10g356600.1-CDS-1"/>
    <property type="gene ID" value="arahy.Tifrunner.gnm2.ann2.Ah10g356600"/>
</dbReference>
<dbReference type="OrthoDB" id="690239at2759"/>
<dbReference type="Proteomes" id="UP000289738">
    <property type="component" value="Chromosome A10"/>
</dbReference>
<dbReference type="GO" id="GO:0005576">
    <property type="term" value="C:extracellular region"/>
    <property type="evidence" value="ECO:0007669"/>
    <property type="project" value="TreeGrafter"/>
</dbReference>
<dbReference type="GO" id="GO:0016020">
    <property type="term" value="C:membrane"/>
    <property type="evidence" value="ECO:0007669"/>
    <property type="project" value="UniProtKB-SubCell"/>
</dbReference>
<dbReference type="GO" id="GO:0012511">
    <property type="term" value="C:monolayer-surrounded lipid storage body"/>
    <property type="evidence" value="ECO:0007669"/>
    <property type="project" value="InterPro"/>
</dbReference>
<dbReference type="GO" id="GO:0019915">
    <property type="term" value="P:lipid storage"/>
    <property type="evidence" value="ECO:0007669"/>
    <property type="project" value="TreeGrafter"/>
</dbReference>
<dbReference type="GO" id="GO:0009791">
    <property type="term" value="P:post-embryonic development"/>
    <property type="evidence" value="ECO:0007669"/>
    <property type="project" value="UniProtKB-ARBA"/>
</dbReference>
<dbReference type="GO" id="GO:0048608">
    <property type="term" value="P:reproductive structure development"/>
    <property type="evidence" value="ECO:0007669"/>
    <property type="project" value="UniProtKB-ARBA"/>
</dbReference>
<dbReference type="GO" id="GO:0019953">
    <property type="term" value="P:sexual reproduction"/>
    <property type="evidence" value="ECO:0007669"/>
    <property type="project" value="TreeGrafter"/>
</dbReference>
<dbReference type="InterPro" id="IPR000136">
    <property type="entry name" value="Oleosin"/>
</dbReference>
<dbReference type="PANTHER" id="PTHR33203">
    <property type="entry name" value="OLEOSIN"/>
    <property type="match status" value="1"/>
</dbReference>
<dbReference type="PANTHER" id="PTHR33203:SF25">
    <property type="entry name" value="OLEOSIN 18.5 KDA"/>
    <property type="match status" value="1"/>
</dbReference>
<dbReference type="Pfam" id="PF01277">
    <property type="entry name" value="Oleosin"/>
    <property type="match status" value="1"/>
</dbReference>
<reference evidence="5" key="1">
    <citation type="submission" date="2005-06" db="EMBL/GenBank/DDBJ databases">
        <title>Isolation of genes encoding peanut seed protein.</title>
        <authorList>
            <person name="Yan Y.S."/>
            <person name="Wang L."/>
            <person name="Huang S.Z."/>
        </authorList>
    </citation>
    <scope>NUCLEOTIDE SEQUENCE [MRNA]</scope>
    <source>
        <tissue evidence="5">Seed</tissue>
    </source>
</reference>
<reference evidence="6 7" key="2">
    <citation type="submission" date="2019-01" db="EMBL/GenBank/DDBJ databases">
        <title>Sequencing of cultivated peanut Arachis hypogaea provides insights into genome evolution and oil improvement.</title>
        <authorList>
            <person name="Chen X."/>
        </authorList>
    </citation>
    <scope>NUCLEOTIDE SEQUENCE [LARGE SCALE GENOMIC DNA]</scope>
    <source>
        <strain evidence="7">cv. Fuhuasheng</strain>
        <tissue evidence="6">Leaf</tissue>
    </source>
</reference>
<reference key="3">
    <citation type="journal article" date="2015" name="PLoS ONE">
        <title>Development of a novel strategy to isolate lipophilic allergens (oleosins) from peanuts.</title>
        <authorList>
            <person name="Schwager C."/>
            <person name="Kull S."/>
            <person name="Krause S."/>
            <person name="Schocker F."/>
            <person name="Petersen A."/>
            <person name="Becker W.M."/>
            <person name="Jappe U."/>
        </authorList>
    </citation>
    <scope>PROTEIN SEQUENCE OF 2-10; 102-113 AND 122-137</scope>
    <scope>SUBCELLULAR LOCATION</scope>
    <scope>TISSUE SPECIFICITY</scope>
    <scope>IDENTIFICATION BY MASS SPECTROMETRY</scope>
    <scope>ACETYLATION AT ALA-2</scope>
    <scope>ALLERGEN</scope>
    <source>
        <tissue evidence="3">Seed</tissue>
    </source>
</reference>
<gene>
    <name evidence="6" type="ORF">Ahy_A10g047467</name>
</gene>
<organism evidence="5">
    <name type="scientific">Arachis hypogaea</name>
    <name type="common">Peanut</name>
    <dbReference type="NCBI Taxonomy" id="3818"/>
    <lineage>
        <taxon>Eukaryota</taxon>
        <taxon>Viridiplantae</taxon>
        <taxon>Streptophyta</taxon>
        <taxon>Embryophyta</taxon>
        <taxon>Tracheophyta</taxon>
        <taxon>Spermatophyta</taxon>
        <taxon>Magnoliopsida</taxon>
        <taxon>eudicotyledons</taxon>
        <taxon>Gunneridae</taxon>
        <taxon>Pentapetalae</taxon>
        <taxon>rosids</taxon>
        <taxon>fabids</taxon>
        <taxon>Fabales</taxon>
        <taxon>Fabaceae</taxon>
        <taxon>Papilionoideae</taxon>
        <taxon>50 kb inversion clade</taxon>
        <taxon>dalbergioids sensu lato</taxon>
        <taxon>Dalbergieae</taxon>
        <taxon>Pterocarpus clade</taxon>
        <taxon>Arachis</taxon>
    </lineage>
</organism>
<feature type="initiator methionine" description="Removed" evidence="2">
    <location>
        <position position="1"/>
    </location>
</feature>
<feature type="chain" id="PRO_0000449842" description="Oleosin Ara h 11.0102">
    <location>
        <begin position="2"/>
        <end position="137"/>
    </location>
</feature>
<feature type="transmembrane region" description="Helical" evidence="1">
    <location>
        <begin position="27"/>
        <end position="47"/>
    </location>
</feature>
<feature type="transmembrane region" description="Helical" evidence="1">
    <location>
        <begin position="55"/>
        <end position="75"/>
    </location>
</feature>
<feature type="modified residue" description="N-acetylalanine; alternate" evidence="2">
    <location>
        <position position="2"/>
    </location>
</feature>